<accession>B2TX16</accession>
<gene>
    <name evidence="1" type="primary">murR</name>
    <name type="ordered locus">SbBS512_E2799</name>
</gene>
<protein>
    <recommendedName>
        <fullName evidence="1">HTH-type transcriptional regulator MurR</fullName>
    </recommendedName>
    <alternativeName>
        <fullName evidence="1">MurPQ operon repressor</fullName>
    </alternativeName>
</protein>
<reference key="1">
    <citation type="submission" date="2008-05" db="EMBL/GenBank/DDBJ databases">
        <title>Complete sequence of Shigella boydii serotype 18 strain BS512.</title>
        <authorList>
            <person name="Rasko D.A."/>
            <person name="Rosovitz M."/>
            <person name="Maurelli A.T."/>
            <person name="Myers G."/>
            <person name="Seshadri R."/>
            <person name="Cer R."/>
            <person name="Jiang L."/>
            <person name="Ravel J."/>
            <person name="Sebastian Y."/>
        </authorList>
    </citation>
    <scope>NUCLEOTIDE SEQUENCE [LARGE SCALE GENOMIC DNA]</scope>
    <source>
        <strain>CDC 3083-94 / BS512</strain>
    </source>
</reference>
<proteinExistence type="inferred from homology"/>
<dbReference type="EMBL" id="CP001063">
    <property type="protein sequence ID" value="ACD08176.1"/>
    <property type="molecule type" value="Genomic_DNA"/>
</dbReference>
<dbReference type="RefSeq" id="WP_000966474.1">
    <property type="nucleotide sequence ID" value="NC_010658.1"/>
</dbReference>
<dbReference type="SMR" id="B2TX16"/>
<dbReference type="STRING" id="344609.SbBS512_E2799"/>
<dbReference type="KEGG" id="sbc:SbBS512_E2799"/>
<dbReference type="HOGENOM" id="CLU_055769_0_2_6"/>
<dbReference type="UniPathway" id="UPA00342"/>
<dbReference type="Proteomes" id="UP000001030">
    <property type="component" value="Chromosome"/>
</dbReference>
<dbReference type="GO" id="GO:0097367">
    <property type="term" value="F:carbohydrate derivative binding"/>
    <property type="evidence" value="ECO:0007669"/>
    <property type="project" value="InterPro"/>
</dbReference>
<dbReference type="GO" id="GO:0003677">
    <property type="term" value="F:DNA binding"/>
    <property type="evidence" value="ECO:0007669"/>
    <property type="project" value="UniProtKB-KW"/>
</dbReference>
<dbReference type="GO" id="GO:0003700">
    <property type="term" value="F:DNA-binding transcription factor activity"/>
    <property type="evidence" value="ECO:0007669"/>
    <property type="project" value="UniProtKB-UniRule"/>
</dbReference>
<dbReference type="GO" id="GO:1901135">
    <property type="term" value="P:carbohydrate derivative metabolic process"/>
    <property type="evidence" value="ECO:0007669"/>
    <property type="project" value="InterPro"/>
</dbReference>
<dbReference type="GO" id="GO:0097173">
    <property type="term" value="P:N-acetylmuramic acid catabolic process"/>
    <property type="evidence" value="ECO:0007669"/>
    <property type="project" value="UniProtKB-UniPathway"/>
</dbReference>
<dbReference type="GO" id="GO:0045892">
    <property type="term" value="P:negative regulation of DNA-templated transcription"/>
    <property type="evidence" value="ECO:0007669"/>
    <property type="project" value="UniProtKB-UniRule"/>
</dbReference>
<dbReference type="GO" id="GO:0043470">
    <property type="term" value="P:regulation of carbohydrate catabolic process"/>
    <property type="evidence" value="ECO:0007669"/>
    <property type="project" value="UniProtKB-UniRule"/>
</dbReference>
<dbReference type="CDD" id="cd05013">
    <property type="entry name" value="SIS_RpiR"/>
    <property type="match status" value="1"/>
</dbReference>
<dbReference type="FunFam" id="3.40.50.10490:FF:000028">
    <property type="entry name" value="HTH-type transcriptional regulator MurR"/>
    <property type="match status" value="1"/>
</dbReference>
<dbReference type="Gene3D" id="3.40.50.10490">
    <property type="entry name" value="Glucose-6-phosphate isomerase like protein, domain 1"/>
    <property type="match status" value="1"/>
</dbReference>
<dbReference type="Gene3D" id="1.10.10.10">
    <property type="entry name" value="Winged helix-like DNA-binding domain superfamily/Winged helix DNA-binding domain"/>
    <property type="match status" value="1"/>
</dbReference>
<dbReference type="HAMAP" id="MF_02108">
    <property type="entry name" value="HTH_type_MurR"/>
    <property type="match status" value="1"/>
</dbReference>
<dbReference type="InterPro" id="IPR009057">
    <property type="entry name" value="Homeodomain-like_sf"/>
</dbReference>
<dbReference type="InterPro" id="IPR000281">
    <property type="entry name" value="HTH_RpiR"/>
</dbReference>
<dbReference type="InterPro" id="IPR047640">
    <property type="entry name" value="RpiR-like"/>
</dbReference>
<dbReference type="InterPro" id="IPR035472">
    <property type="entry name" value="RpiR-like_SIS"/>
</dbReference>
<dbReference type="InterPro" id="IPR001347">
    <property type="entry name" value="SIS_dom"/>
</dbReference>
<dbReference type="InterPro" id="IPR046348">
    <property type="entry name" value="SIS_dom_sf"/>
</dbReference>
<dbReference type="InterPro" id="IPR022821">
    <property type="entry name" value="Tscrpt_reg_HTH_MurR"/>
</dbReference>
<dbReference type="InterPro" id="IPR036388">
    <property type="entry name" value="WH-like_DNA-bd_sf"/>
</dbReference>
<dbReference type="NCBIfam" id="NF012026">
    <property type="entry name" value="PRK15482.1"/>
    <property type="match status" value="1"/>
</dbReference>
<dbReference type="PANTHER" id="PTHR30514">
    <property type="entry name" value="GLUCOKINASE"/>
    <property type="match status" value="1"/>
</dbReference>
<dbReference type="PANTHER" id="PTHR30514:SF17">
    <property type="entry name" value="HTH-TYPE TRANSCRIPTIONAL REGULATOR MURR"/>
    <property type="match status" value="1"/>
</dbReference>
<dbReference type="Pfam" id="PF01418">
    <property type="entry name" value="HTH_6"/>
    <property type="match status" value="1"/>
</dbReference>
<dbReference type="Pfam" id="PF01380">
    <property type="entry name" value="SIS"/>
    <property type="match status" value="1"/>
</dbReference>
<dbReference type="SUPFAM" id="SSF46689">
    <property type="entry name" value="Homeodomain-like"/>
    <property type="match status" value="1"/>
</dbReference>
<dbReference type="SUPFAM" id="SSF53697">
    <property type="entry name" value="SIS domain"/>
    <property type="match status" value="1"/>
</dbReference>
<dbReference type="PROSITE" id="PS51071">
    <property type="entry name" value="HTH_RPIR"/>
    <property type="match status" value="1"/>
</dbReference>
<dbReference type="PROSITE" id="PS51464">
    <property type="entry name" value="SIS"/>
    <property type="match status" value="1"/>
</dbReference>
<organism>
    <name type="scientific">Shigella boydii serotype 18 (strain CDC 3083-94 / BS512)</name>
    <dbReference type="NCBI Taxonomy" id="344609"/>
    <lineage>
        <taxon>Bacteria</taxon>
        <taxon>Pseudomonadati</taxon>
        <taxon>Pseudomonadota</taxon>
        <taxon>Gammaproteobacteria</taxon>
        <taxon>Enterobacterales</taxon>
        <taxon>Enterobacteriaceae</taxon>
        <taxon>Shigella</taxon>
    </lineage>
</organism>
<sequence>MLYLTKISNAGSEFTENEQKIADFLQANVSELQSVSSRQMAKQLGISQSSIVKFAQKLGAQGFTELRMALIGEYSASREKTNTTALHLHSSITSDDSLEVIARKLNREKELALEQTCALFDYARLQKIIEVISKAPFIQITGLGGSALVGRDLSFKLMKIGYRVACEADTHVQATVSQALKKGDVQIAISYSGSKKEIVLCAEAARKQGATVIAITSLADSPLRRLAHFTLDTVSGETEWRSSSMSTRTAQNSVTDLLFVGLVQLNDVASLKMIQRSSELTQRLK</sequence>
<evidence type="ECO:0000255" key="1">
    <source>
        <dbReference type="HAMAP-Rule" id="MF_02108"/>
    </source>
</evidence>
<feature type="chain" id="PRO_0000387771" description="HTH-type transcriptional regulator MurR">
    <location>
        <begin position="1"/>
        <end position="285"/>
    </location>
</feature>
<feature type="domain" description="HTH rpiR-type" evidence="1">
    <location>
        <begin position="1"/>
        <end position="77"/>
    </location>
</feature>
<feature type="domain" description="SIS" evidence="1">
    <location>
        <begin position="128"/>
        <end position="279"/>
    </location>
</feature>
<feature type="DNA-binding region" description="H-T-H motif" evidence="1">
    <location>
        <begin position="37"/>
        <end position="56"/>
    </location>
</feature>
<keyword id="KW-0119">Carbohydrate metabolism</keyword>
<keyword id="KW-0238">DNA-binding</keyword>
<keyword id="KW-1185">Reference proteome</keyword>
<keyword id="KW-0678">Repressor</keyword>
<keyword id="KW-0804">Transcription</keyword>
<keyword id="KW-0805">Transcription regulation</keyword>
<comment type="function">
    <text evidence="1">Represses the expression of the murPQ operon involved in the uptake and degradation of N-acetylmuramic acid (MurNAc). Binds to two adjacent inverted repeats within the operator region. MurNAc 6-phosphate, the substrate of MurQ, is the specific inducer that weakens binding of MurR to the operator.</text>
</comment>
<comment type="pathway">
    <text>Amino-sugar metabolism; N-acetylmuramate degradation [regulation].</text>
</comment>
<comment type="subunit">
    <text evidence="1">Homotetramer.</text>
</comment>
<name>MURR_SHIB3</name>